<dbReference type="EC" id="3.1.3.11" evidence="4"/>
<dbReference type="EMBL" id="AB007194">
    <property type="protein sequence ID" value="BAA25423.1"/>
    <property type="molecule type" value="mRNA"/>
</dbReference>
<dbReference type="EMBL" id="AC135208">
    <property type="protein sequence ID" value="AAP06885.1"/>
    <property type="molecule type" value="Genomic_DNA"/>
</dbReference>
<dbReference type="EMBL" id="AC139168">
    <property type="protein sequence ID" value="AAP06892.1"/>
    <property type="molecule type" value="Genomic_DNA"/>
</dbReference>
<dbReference type="EMBL" id="DP000009">
    <property type="protein sequence ID" value="ABF95158.1"/>
    <property type="molecule type" value="Genomic_DNA"/>
</dbReference>
<dbReference type="EMBL" id="AP008209">
    <property type="protein sequence ID" value="BAF11578.1"/>
    <property type="molecule type" value="Genomic_DNA"/>
</dbReference>
<dbReference type="EMBL" id="AP014959">
    <property type="protein sequence ID" value="BAS83424.1"/>
    <property type="molecule type" value="Genomic_DNA"/>
</dbReference>
<dbReference type="EMBL" id="CM000140">
    <property type="protein sequence ID" value="EAZ26381.1"/>
    <property type="molecule type" value="Genomic_DNA"/>
</dbReference>
<dbReference type="EMBL" id="AK062233">
    <property type="protein sequence ID" value="BAG88250.1"/>
    <property type="molecule type" value="mRNA"/>
</dbReference>
<dbReference type="RefSeq" id="XP_015632363.1">
    <property type="nucleotide sequence ID" value="XM_015776877.1"/>
</dbReference>
<dbReference type="SMR" id="O64422"/>
<dbReference type="FunCoup" id="O64422">
    <property type="interactions" value="1137"/>
</dbReference>
<dbReference type="STRING" id="39947.O64422"/>
<dbReference type="PaxDb" id="39947-O64422"/>
<dbReference type="EnsemblPlants" id="Os03t0267300-01">
    <property type="protein sequence ID" value="Os03t0267300-01"/>
    <property type="gene ID" value="Os03g0267300"/>
</dbReference>
<dbReference type="Gramene" id="Os03t0267300-01">
    <property type="protein sequence ID" value="Os03t0267300-01"/>
    <property type="gene ID" value="Os03g0267300"/>
</dbReference>
<dbReference type="KEGG" id="dosa:Os03g0267300"/>
<dbReference type="eggNOG" id="KOG1458">
    <property type="taxonomic scope" value="Eukaryota"/>
</dbReference>
<dbReference type="HOGENOM" id="CLU_039977_1_0_1"/>
<dbReference type="InParanoid" id="O64422"/>
<dbReference type="OMA" id="RCMAVGT"/>
<dbReference type="OrthoDB" id="10256725at2759"/>
<dbReference type="PlantReactome" id="R-OSA-1119519">
    <property type="pathway name" value="Calvin cycle"/>
</dbReference>
<dbReference type="UniPathway" id="UPA00116"/>
<dbReference type="Proteomes" id="UP000000763">
    <property type="component" value="Chromosome 3"/>
</dbReference>
<dbReference type="Proteomes" id="UP000007752">
    <property type="component" value="Chromosome 3"/>
</dbReference>
<dbReference type="Proteomes" id="UP000059680">
    <property type="component" value="Chromosome 3"/>
</dbReference>
<dbReference type="ExpressionAtlas" id="O64422">
    <property type="expression patterns" value="baseline and differential"/>
</dbReference>
<dbReference type="GO" id="GO:0009570">
    <property type="term" value="C:chloroplast stroma"/>
    <property type="evidence" value="ECO:0007669"/>
    <property type="project" value="UniProtKB-SubCell"/>
</dbReference>
<dbReference type="GO" id="GO:0005737">
    <property type="term" value="C:cytoplasm"/>
    <property type="evidence" value="ECO:0000318"/>
    <property type="project" value="GO_Central"/>
</dbReference>
<dbReference type="GO" id="GO:0005829">
    <property type="term" value="C:cytosol"/>
    <property type="evidence" value="ECO:0000318"/>
    <property type="project" value="GO_Central"/>
</dbReference>
<dbReference type="GO" id="GO:0042132">
    <property type="term" value="F:fructose 1,6-bisphosphate 1-phosphatase activity"/>
    <property type="evidence" value="ECO:0000318"/>
    <property type="project" value="GO_Central"/>
</dbReference>
<dbReference type="GO" id="GO:0046872">
    <property type="term" value="F:metal ion binding"/>
    <property type="evidence" value="ECO:0007669"/>
    <property type="project" value="UniProtKB-KW"/>
</dbReference>
<dbReference type="GO" id="GO:0030388">
    <property type="term" value="P:fructose 1,6-bisphosphate metabolic process"/>
    <property type="evidence" value="ECO:0000318"/>
    <property type="project" value="GO_Central"/>
</dbReference>
<dbReference type="GO" id="GO:0006002">
    <property type="term" value="P:fructose 6-phosphate metabolic process"/>
    <property type="evidence" value="ECO:0000318"/>
    <property type="project" value="GO_Central"/>
</dbReference>
<dbReference type="GO" id="GO:0006000">
    <property type="term" value="P:fructose metabolic process"/>
    <property type="evidence" value="ECO:0000318"/>
    <property type="project" value="GO_Central"/>
</dbReference>
<dbReference type="GO" id="GO:0006094">
    <property type="term" value="P:gluconeogenesis"/>
    <property type="evidence" value="ECO:0000318"/>
    <property type="project" value="GO_Central"/>
</dbReference>
<dbReference type="GO" id="GO:0019253">
    <property type="term" value="P:reductive pentose-phosphate cycle"/>
    <property type="evidence" value="ECO:0007669"/>
    <property type="project" value="UniProtKB-UniPathway"/>
</dbReference>
<dbReference type="CDD" id="cd00354">
    <property type="entry name" value="FBPase"/>
    <property type="match status" value="1"/>
</dbReference>
<dbReference type="FunFam" id="3.40.190.80:FF:000001">
    <property type="entry name" value="Fructose-1,6-bisphosphatase class 1"/>
    <property type="match status" value="1"/>
</dbReference>
<dbReference type="FunFam" id="3.30.540.10:FF:000014">
    <property type="entry name" value="Fructose-1,6-bisphosphatase, chloroplastic"/>
    <property type="match status" value="1"/>
</dbReference>
<dbReference type="Gene3D" id="3.40.190.80">
    <property type="match status" value="1"/>
</dbReference>
<dbReference type="Gene3D" id="3.30.540.10">
    <property type="entry name" value="Fructose-1,6-Bisphosphatase, subunit A, domain 1"/>
    <property type="match status" value="1"/>
</dbReference>
<dbReference type="HAMAP" id="MF_01855">
    <property type="entry name" value="FBPase_class1"/>
    <property type="match status" value="1"/>
</dbReference>
<dbReference type="InterPro" id="IPR044015">
    <property type="entry name" value="FBPase_C_dom"/>
</dbReference>
<dbReference type="InterPro" id="IPR000146">
    <property type="entry name" value="FBPase_class-1"/>
</dbReference>
<dbReference type="InterPro" id="IPR033391">
    <property type="entry name" value="FBPase_N"/>
</dbReference>
<dbReference type="InterPro" id="IPR028343">
    <property type="entry name" value="FBPtase"/>
</dbReference>
<dbReference type="InterPro" id="IPR020548">
    <property type="entry name" value="Fructose_bisphosphatase_AS"/>
</dbReference>
<dbReference type="NCBIfam" id="NF006778">
    <property type="entry name" value="PRK09293.1-1"/>
    <property type="match status" value="1"/>
</dbReference>
<dbReference type="PANTHER" id="PTHR11556">
    <property type="entry name" value="FRUCTOSE-1,6-BISPHOSPHATASE-RELATED"/>
    <property type="match status" value="1"/>
</dbReference>
<dbReference type="PANTHER" id="PTHR11556:SF1">
    <property type="entry name" value="FRUCTOSE-BISPHOSPHATASE"/>
    <property type="match status" value="1"/>
</dbReference>
<dbReference type="Pfam" id="PF00316">
    <property type="entry name" value="FBPase"/>
    <property type="match status" value="1"/>
</dbReference>
<dbReference type="Pfam" id="PF18913">
    <property type="entry name" value="FBPase_C"/>
    <property type="match status" value="1"/>
</dbReference>
<dbReference type="PIRSF" id="PIRSF500210">
    <property type="entry name" value="FBPtase"/>
    <property type="match status" value="1"/>
</dbReference>
<dbReference type="PIRSF" id="PIRSF000904">
    <property type="entry name" value="FBPtase_SBPase"/>
    <property type="match status" value="1"/>
</dbReference>
<dbReference type="PRINTS" id="PR00115">
    <property type="entry name" value="F16BPHPHTASE"/>
</dbReference>
<dbReference type="SUPFAM" id="SSF56655">
    <property type="entry name" value="Carbohydrate phosphatase"/>
    <property type="match status" value="1"/>
</dbReference>
<dbReference type="PROSITE" id="PS00124">
    <property type="entry name" value="FBPASE"/>
    <property type="match status" value="1"/>
</dbReference>
<feature type="transit peptide" description="Chloroplast" evidence="3">
    <location>
        <begin position="1"/>
        <end position="47"/>
    </location>
</feature>
<feature type="chain" id="PRO_0000008816" description="Fructose-1,6-bisphosphatase, chloroplastic">
    <location>
        <begin position="48"/>
        <end position="406"/>
    </location>
</feature>
<feature type="binding site" evidence="1">
    <location>
        <position position="128"/>
    </location>
    <ligand>
        <name>Mg(2+)</name>
        <dbReference type="ChEBI" id="CHEBI:18420"/>
        <label>1</label>
    </ligand>
</feature>
<feature type="binding site" evidence="1">
    <location>
        <position position="157"/>
    </location>
    <ligand>
        <name>Mg(2+)</name>
        <dbReference type="ChEBI" id="CHEBI:18420"/>
        <label>1</label>
    </ligand>
</feature>
<feature type="binding site" evidence="1">
    <location>
        <position position="157"/>
    </location>
    <ligand>
        <name>Mg(2+)</name>
        <dbReference type="ChEBI" id="CHEBI:18420"/>
        <label>2</label>
    </ligand>
</feature>
<feature type="binding site" evidence="1">
    <location>
        <position position="178"/>
    </location>
    <ligand>
        <name>Mg(2+)</name>
        <dbReference type="ChEBI" id="CHEBI:18420"/>
        <label>2</label>
    </ligand>
</feature>
<feature type="binding site" evidence="1">
    <location>
        <position position="178"/>
    </location>
    <ligand>
        <name>Mg(2+)</name>
        <dbReference type="ChEBI" id="CHEBI:18420"/>
        <label>3</label>
    </ligand>
</feature>
<feature type="binding site" evidence="1">
    <location>
        <position position="180"/>
    </location>
    <ligand>
        <name>Mg(2+)</name>
        <dbReference type="ChEBI" id="CHEBI:18420"/>
        <label>2</label>
    </ligand>
</feature>
<feature type="binding site" evidence="1">
    <location>
        <begin position="181"/>
        <end position="184"/>
    </location>
    <ligand>
        <name>substrate</name>
    </ligand>
</feature>
<feature type="binding site" evidence="1">
    <location>
        <position position="181"/>
    </location>
    <ligand>
        <name>Mg(2+)</name>
        <dbReference type="ChEBI" id="CHEBI:18420"/>
        <label>3</label>
    </ligand>
</feature>
<feature type="binding site" evidence="1">
    <location>
        <position position="286"/>
    </location>
    <ligand>
        <name>substrate</name>
    </ligand>
</feature>
<feature type="binding site" evidence="1">
    <location>
        <position position="318"/>
    </location>
    <ligand>
        <name>substrate</name>
    </ligand>
</feature>
<feature type="binding site" evidence="1">
    <location>
        <position position="336"/>
    </location>
    <ligand>
        <name>substrate</name>
    </ligand>
</feature>
<feature type="binding site" evidence="1">
    <location>
        <position position="338"/>
    </location>
    <ligand>
        <name>substrate</name>
    </ligand>
</feature>
<feature type="binding site" evidence="1">
    <location>
        <position position="348"/>
    </location>
    <ligand>
        <name>substrate</name>
    </ligand>
</feature>
<feature type="binding site" evidence="1">
    <location>
        <position position="354"/>
    </location>
    <ligand>
        <name>Mg(2+)</name>
        <dbReference type="ChEBI" id="CHEBI:18420"/>
        <label>3</label>
    </ligand>
</feature>
<feature type="disulfide bond" description="Redox-active (light-modulated)" evidence="1">
    <location>
        <begin position="222"/>
        <end position="227"/>
    </location>
</feature>
<protein>
    <recommendedName>
        <fullName evidence="4">Fructose-1,6-bisphosphatase, chloroplastic</fullName>
        <shortName evidence="4">FBPase</shortName>
        <ecNumber evidence="4">3.1.3.11</ecNumber>
    </recommendedName>
    <alternativeName>
        <fullName evidence="4">D-fructose-1,6-bisphosphate 1-phosphohydrolase</fullName>
    </alternativeName>
</protein>
<sequence length="406" mass="43604">MAAAATTSSHLLLLSRQQAAASLQCGLSFRRQPGRLAGGSSAPSVRCMAAVDTASAPAATEASKKSSYEITTLTTWLLKQEQAGTIDGEMTIVLASISTACKQIASLVQRAPISNLTGVQGAVNVQGEDQKKLDVVSNEVFSNCLKSSGRTGVIASEEEDVPVAVEESYSGNYIVVFDPLDGSSNIDAAVSTGSIFGIYSPNDECLADIADDQNLDQVEQRCIVSVCQPGSNLLAAGYCMYSSSVIFVLTIGTGVYVFTLDPMYGEFVLTQEKVQIPKAGKIYAFNEGNYALWDDKLKSYMDSLKEPGPSGKPYSARYIGSLVGDFHRTLLYGGIYGYPRDQKSKNGKLRLLYECAPMSFIVEQAGGKGSDGHQRILDIMPTEIHQRVPLYIGSVEEVEKVEKFLA</sequence>
<gene>
    <name evidence="8" type="ordered locus">Os03g0267300</name>
    <name evidence="7" type="ordered locus">LOC_Os03g16050</name>
    <name evidence="5" type="ORF">OJ1364E02.13</name>
    <name evidence="6" type="ORF">OJA1364E02.2</name>
    <name evidence="9" type="ORF">OsJ_10264</name>
</gene>
<reference key="1">
    <citation type="online journal article" date="1998" name="Plant Gene Register">
        <title>Cloning of a cDNA encoding plastidic fructose-1,6-Bisphosphatase from rice (Oryza sativa L.).</title>
        <authorList>
            <person name="Takahashi S."/>
            <person name="Hirose T."/>
            <person name="Imaizumi N."/>
            <person name="Ohsugi R."/>
        </authorList>
        <locator>PGR98-083</locator>
    </citation>
    <scope>NUCLEOTIDE SEQUENCE [MRNA]</scope>
    <source>
        <strain>cv. Nipponbare</strain>
        <tissue>Leaf</tissue>
    </source>
</reference>
<reference key="2">
    <citation type="journal article" date="2005" name="Genome Res.">
        <title>Sequence, annotation, and analysis of synteny between rice chromosome 3 and diverged grass species.</title>
        <authorList>
            <consortium name="The rice chromosome 3 sequencing consortium"/>
            <person name="Buell C.R."/>
            <person name="Yuan Q."/>
            <person name="Ouyang S."/>
            <person name="Liu J."/>
            <person name="Zhu W."/>
            <person name="Wang A."/>
            <person name="Maiti R."/>
            <person name="Haas B."/>
            <person name="Wortman J."/>
            <person name="Pertea M."/>
            <person name="Jones K.M."/>
            <person name="Kim M."/>
            <person name="Overton L."/>
            <person name="Tsitrin T."/>
            <person name="Fadrosh D."/>
            <person name="Bera J."/>
            <person name="Weaver B."/>
            <person name="Jin S."/>
            <person name="Johri S."/>
            <person name="Reardon M."/>
            <person name="Webb K."/>
            <person name="Hill J."/>
            <person name="Moffat K."/>
            <person name="Tallon L."/>
            <person name="Van Aken S."/>
            <person name="Lewis M."/>
            <person name="Utterback T."/>
            <person name="Feldblyum T."/>
            <person name="Zismann V."/>
            <person name="Iobst S."/>
            <person name="Hsiao J."/>
            <person name="de Vazeille A.R."/>
            <person name="Salzberg S.L."/>
            <person name="White O."/>
            <person name="Fraser C.M."/>
            <person name="Yu Y."/>
            <person name="Kim H."/>
            <person name="Rambo T."/>
            <person name="Currie J."/>
            <person name="Collura K."/>
            <person name="Kernodle-Thompson S."/>
            <person name="Wei F."/>
            <person name="Kudrna K."/>
            <person name="Ammiraju J.S.S."/>
            <person name="Luo M."/>
            <person name="Goicoechea J.L."/>
            <person name="Wing R.A."/>
            <person name="Henry D."/>
            <person name="Oates R."/>
            <person name="Palmer M."/>
            <person name="Pries G."/>
            <person name="Saski C."/>
            <person name="Simmons J."/>
            <person name="Soderlund C."/>
            <person name="Nelson W."/>
            <person name="de la Bastide M."/>
            <person name="Spiegel L."/>
            <person name="Nascimento L."/>
            <person name="Huang E."/>
            <person name="Preston R."/>
            <person name="Zutavern T."/>
            <person name="Palmer L."/>
            <person name="O'Shaughnessy A."/>
            <person name="Dike S."/>
            <person name="McCombie W.R."/>
            <person name="Minx P."/>
            <person name="Cordum H."/>
            <person name="Wilson R."/>
            <person name="Jin W."/>
            <person name="Lee H.R."/>
            <person name="Jiang J."/>
            <person name="Jackson S."/>
        </authorList>
    </citation>
    <scope>NUCLEOTIDE SEQUENCE [LARGE SCALE GENOMIC DNA]</scope>
    <source>
        <strain>cv. Nipponbare</strain>
    </source>
</reference>
<reference key="3">
    <citation type="journal article" date="2005" name="Nature">
        <title>The map-based sequence of the rice genome.</title>
        <authorList>
            <consortium name="International rice genome sequencing project (IRGSP)"/>
        </authorList>
    </citation>
    <scope>NUCLEOTIDE SEQUENCE [LARGE SCALE GENOMIC DNA]</scope>
    <source>
        <strain>cv. Nipponbare</strain>
    </source>
</reference>
<reference key="4">
    <citation type="journal article" date="2008" name="Nucleic Acids Res.">
        <title>The rice annotation project database (RAP-DB): 2008 update.</title>
        <authorList>
            <consortium name="The rice annotation project (RAP)"/>
        </authorList>
    </citation>
    <scope>GENOME REANNOTATION</scope>
    <source>
        <strain>cv. Nipponbare</strain>
    </source>
</reference>
<reference key="5">
    <citation type="journal article" date="2013" name="Rice">
        <title>Improvement of the Oryza sativa Nipponbare reference genome using next generation sequence and optical map data.</title>
        <authorList>
            <person name="Kawahara Y."/>
            <person name="de la Bastide M."/>
            <person name="Hamilton J.P."/>
            <person name="Kanamori H."/>
            <person name="McCombie W.R."/>
            <person name="Ouyang S."/>
            <person name="Schwartz D.C."/>
            <person name="Tanaka T."/>
            <person name="Wu J."/>
            <person name="Zhou S."/>
            <person name="Childs K.L."/>
            <person name="Davidson R.M."/>
            <person name="Lin H."/>
            <person name="Quesada-Ocampo L."/>
            <person name="Vaillancourt B."/>
            <person name="Sakai H."/>
            <person name="Lee S.S."/>
            <person name="Kim J."/>
            <person name="Numa H."/>
            <person name="Itoh T."/>
            <person name="Buell C.R."/>
            <person name="Matsumoto T."/>
        </authorList>
    </citation>
    <scope>GENOME REANNOTATION</scope>
    <source>
        <strain>cv. Nipponbare</strain>
    </source>
</reference>
<reference key="6">
    <citation type="journal article" date="2005" name="PLoS Biol.">
        <title>The genomes of Oryza sativa: a history of duplications.</title>
        <authorList>
            <person name="Yu J."/>
            <person name="Wang J."/>
            <person name="Lin W."/>
            <person name="Li S."/>
            <person name="Li H."/>
            <person name="Zhou J."/>
            <person name="Ni P."/>
            <person name="Dong W."/>
            <person name="Hu S."/>
            <person name="Zeng C."/>
            <person name="Zhang J."/>
            <person name="Zhang Y."/>
            <person name="Li R."/>
            <person name="Xu Z."/>
            <person name="Li S."/>
            <person name="Li X."/>
            <person name="Zheng H."/>
            <person name="Cong L."/>
            <person name="Lin L."/>
            <person name="Yin J."/>
            <person name="Geng J."/>
            <person name="Li G."/>
            <person name="Shi J."/>
            <person name="Liu J."/>
            <person name="Lv H."/>
            <person name="Li J."/>
            <person name="Wang J."/>
            <person name="Deng Y."/>
            <person name="Ran L."/>
            <person name="Shi X."/>
            <person name="Wang X."/>
            <person name="Wu Q."/>
            <person name="Li C."/>
            <person name="Ren X."/>
            <person name="Wang J."/>
            <person name="Wang X."/>
            <person name="Li D."/>
            <person name="Liu D."/>
            <person name="Zhang X."/>
            <person name="Ji Z."/>
            <person name="Zhao W."/>
            <person name="Sun Y."/>
            <person name="Zhang Z."/>
            <person name="Bao J."/>
            <person name="Han Y."/>
            <person name="Dong L."/>
            <person name="Ji J."/>
            <person name="Chen P."/>
            <person name="Wu S."/>
            <person name="Liu J."/>
            <person name="Xiao Y."/>
            <person name="Bu D."/>
            <person name="Tan J."/>
            <person name="Yang L."/>
            <person name="Ye C."/>
            <person name="Zhang J."/>
            <person name="Xu J."/>
            <person name="Zhou Y."/>
            <person name="Yu Y."/>
            <person name="Zhang B."/>
            <person name="Zhuang S."/>
            <person name="Wei H."/>
            <person name="Liu B."/>
            <person name="Lei M."/>
            <person name="Yu H."/>
            <person name="Li Y."/>
            <person name="Xu H."/>
            <person name="Wei S."/>
            <person name="He X."/>
            <person name="Fang L."/>
            <person name="Zhang Z."/>
            <person name="Zhang Y."/>
            <person name="Huang X."/>
            <person name="Su Z."/>
            <person name="Tong W."/>
            <person name="Li J."/>
            <person name="Tong Z."/>
            <person name="Li S."/>
            <person name="Ye J."/>
            <person name="Wang L."/>
            <person name="Fang L."/>
            <person name="Lei T."/>
            <person name="Chen C.-S."/>
            <person name="Chen H.-C."/>
            <person name="Xu Z."/>
            <person name="Li H."/>
            <person name="Huang H."/>
            <person name="Zhang F."/>
            <person name="Xu H."/>
            <person name="Li N."/>
            <person name="Zhao C."/>
            <person name="Li S."/>
            <person name="Dong L."/>
            <person name="Huang Y."/>
            <person name="Li L."/>
            <person name="Xi Y."/>
            <person name="Qi Q."/>
            <person name="Li W."/>
            <person name="Zhang B."/>
            <person name="Hu W."/>
            <person name="Zhang Y."/>
            <person name="Tian X."/>
            <person name="Jiao Y."/>
            <person name="Liang X."/>
            <person name="Jin J."/>
            <person name="Gao L."/>
            <person name="Zheng W."/>
            <person name="Hao B."/>
            <person name="Liu S.-M."/>
            <person name="Wang W."/>
            <person name="Yuan L."/>
            <person name="Cao M."/>
            <person name="McDermott J."/>
            <person name="Samudrala R."/>
            <person name="Wang J."/>
            <person name="Wong G.K.-S."/>
            <person name="Yang H."/>
        </authorList>
    </citation>
    <scope>NUCLEOTIDE SEQUENCE [LARGE SCALE GENOMIC DNA]</scope>
    <source>
        <strain>cv. Nipponbare</strain>
    </source>
</reference>
<reference key="7">
    <citation type="journal article" date="2003" name="Science">
        <title>Collection, mapping, and annotation of over 28,000 cDNA clones from japonica rice.</title>
        <authorList>
            <consortium name="The rice full-length cDNA consortium"/>
        </authorList>
    </citation>
    <scope>NUCLEOTIDE SEQUENCE [LARGE SCALE MRNA]</scope>
    <source>
        <strain>cv. Nipponbare</strain>
    </source>
</reference>
<proteinExistence type="evidence at transcript level"/>
<keyword id="KW-0113">Calvin cycle</keyword>
<keyword id="KW-0119">Carbohydrate metabolism</keyword>
<keyword id="KW-0150">Chloroplast</keyword>
<keyword id="KW-1015">Disulfide bond</keyword>
<keyword id="KW-0378">Hydrolase</keyword>
<keyword id="KW-0460">Magnesium</keyword>
<keyword id="KW-0479">Metal-binding</keyword>
<keyword id="KW-0934">Plastid</keyword>
<keyword id="KW-1185">Reference proteome</keyword>
<keyword id="KW-0809">Transit peptide</keyword>
<accession>O64422</accession>
<accession>Q10NK0</accession>
<accession>Q7G5R1</accession>
<organism>
    <name type="scientific">Oryza sativa subsp. japonica</name>
    <name type="common">Rice</name>
    <dbReference type="NCBI Taxonomy" id="39947"/>
    <lineage>
        <taxon>Eukaryota</taxon>
        <taxon>Viridiplantae</taxon>
        <taxon>Streptophyta</taxon>
        <taxon>Embryophyta</taxon>
        <taxon>Tracheophyta</taxon>
        <taxon>Spermatophyta</taxon>
        <taxon>Magnoliopsida</taxon>
        <taxon>Liliopsida</taxon>
        <taxon>Poales</taxon>
        <taxon>Poaceae</taxon>
        <taxon>BOP clade</taxon>
        <taxon>Oryzoideae</taxon>
        <taxon>Oryzeae</taxon>
        <taxon>Oryzinae</taxon>
        <taxon>Oryza</taxon>
        <taxon>Oryza sativa</taxon>
    </lineage>
</organism>
<name>F16P1_ORYSJ</name>
<comment type="function">
    <text evidence="2">Catalyzes the irreversible reaction from fructose-1,6-bisphosphate to fructose-6-phosphate and inorganic phosphate, to regenerate the primary CO(2) acceptor molecule, ribulose-1,5-bisphosphate. Involved in the regulation of photosynthetic performance and sucrose synthesis.</text>
</comment>
<comment type="catalytic activity">
    <reaction evidence="2">
        <text>beta-D-fructose 1,6-bisphosphate + H2O = beta-D-fructose 6-phosphate + phosphate</text>
        <dbReference type="Rhea" id="RHEA:11064"/>
        <dbReference type="ChEBI" id="CHEBI:15377"/>
        <dbReference type="ChEBI" id="CHEBI:32966"/>
        <dbReference type="ChEBI" id="CHEBI:43474"/>
        <dbReference type="ChEBI" id="CHEBI:57634"/>
        <dbReference type="EC" id="3.1.3.11"/>
    </reaction>
</comment>
<comment type="cofactor">
    <cofactor evidence="1">
        <name>Mg(2+)</name>
        <dbReference type="ChEBI" id="CHEBI:18420"/>
    </cofactor>
    <text evidence="1">Binds 3 Mg(2+) ions per subunit.</text>
</comment>
<comment type="pathway">
    <text evidence="4">Carbohydrate biosynthesis; Calvin cycle.</text>
</comment>
<comment type="subunit">
    <text evidence="1">Homotetramer.</text>
</comment>
<comment type="subcellular location">
    <subcellularLocation>
        <location evidence="4">Plastid</location>
        <location evidence="4">Chloroplast stroma</location>
    </subcellularLocation>
</comment>
<comment type="induction">
    <text evidence="1">Light activation through pH changes, Mg(2+) levels and also by light-modulated reduction of essential disulfide groups via the ferredoxin-thioredoxin f system.</text>
</comment>
<comment type="miscellaneous">
    <text evidence="4">In plants there are two FBPase isozymes: one in the cytosol and the other in the chloroplast.</text>
</comment>
<comment type="similarity">
    <text evidence="4">Belongs to the FBPase class 1 family.</text>
</comment>
<evidence type="ECO:0000250" key="1"/>
<evidence type="ECO:0000250" key="2">
    <source>
        <dbReference type="UniProtKB" id="A2XEX2"/>
    </source>
</evidence>
<evidence type="ECO:0000255" key="3"/>
<evidence type="ECO:0000305" key="4"/>
<evidence type="ECO:0000312" key="5">
    <source>
        <dbReference type="EMBL" id="AAP06885.1"/>
    </source>
</evidence>
<evidence type="ECO:0000312" key="6">
    <source>
        <dbReference type="EMBL" id="AAP06892.1"/>
    </source>
</evidence>
<evidence type="ECO:0000312" key="7">
    <source>
        <dbReference type="EMBL" id="ABF95158.1"/>
    </source>
</evidence>
<evidence type="ECO:0000312" key="8">
    <source>
        <dbReference type="EMBL" id="BAS83424.1"/>
    </source>
</evidence>
<evidence type="ECO:0000312" key="9">
    <source>
        <dbReference type="EMBL" id="EAZ26381.1"/>
    </source>
</evidence>